<gene>
    <name evidence="1" type="primary">psd</name>
    <name type="ordered locus">BR0443</name>
    <name type="ordered locus">BS1330_I0444</name>
</gene>
<organism>
    <name type="scientific">Brucella suis biovar 1 (strain 1330)</name>
    <dbReference type="NCBI Taxonomy" id="204722"/>
    <lineage>
        <taxon>Bacteria</taxon>
        <taxon>Pseudomonadati</taxon>
        <taxon>Pseudomonadota</taxon>
        <taxon>Alphaproteobacteria</taxon>
        <taxon>Hyphomicrobiales</taxon>
        <taxon>Brucellaceae</taxon>
        <taxon>Brucella/Ochrobactrum group</taxon>
        <taxon>Brucella</taxon>
    </lineage>
</organism>
<accession>Q8G285</accession>
<accession>G0K6R2</accession>
<feature type="chain" id="PRO_0000029761" description="Phosphatidylserine decarboxylase beta chain" evidence="1">
    <location>
        <begin position="1"/>
        <end position="189"/>
    </location>
</feature>
<feature type="chain" id="PRO_0000029762" description="Phosphatidylserine decarboxylase alpha chain" evidence="1">
    <location>
        <begin position="190"/>
        <end position="232"/>
    </location>
</feature>
<feature type="active site" description="Schiff-base intermediate with substrate; via pyruvic acid" evidence="1">
    <location>
        <position position="190"/>
    </location>
</feature>
<feature type="site" description="Cleavage (non-hydrolytic); by autocatalysis" evidence="1">
    <location>
        <begin position="189"/>
        <end position="190"/>
    </location>
</feature>
<feature type="modified residue" description="Pyruvic acid (Ser); by autocatalysis" evidence="1">
    <location>
        <position position="190"/>
    </location>
</feature>
<proteinExistence type="inferred from homology"/>
<evidence type="ECO:0000255" key="1">
    <source>
        <dbReference type="HAMAP-Rule" id="MF_00664"/>
    </source>
</evidence>
<sequence>MSLTDTIRNTFVPIHREGYPFIAGFFVVSLILGWLWDPLFWIGMVLTVWCIYFYRDPERVTPMDDDLVISPADGKVSFVGLAVPPAELDLGYEPMTRVSVFMNVFSVHINRSPVRGKIDKVVHRPGKFLNAELDKASTENERNSVLIESPHGKVGVVQIAGLVARRIVCWSNQDDELSVGERFGLIRFGSRVDVYLPSDATVRVAVGQTAIAGETVLADYGTERGEPVVRIA</sequence>
<name>PSD_BRUSU</name>
<keyword id="KW-1003">Cell membrane</keyword>
<keyword id="KW-0210">Decarboxylase</keyword>
<keyword id="KW-0444">Lipid biosynthesis</keyword>
<keyword id="KW-0443">Lipid metabolism</keyword>
<keyword id="KW-0456">Lyase</keyword>
<keyword id="KW-0472">Membrane</keyword>
<keyword id="KW-0594">Phospholipid biosynthesis</keyword>
<keyword id="KW-1208">Phospholipid metabolism</keyword>
<keyword id="KW-0670">Pyruvate</keyword>
<keyword id="KW-0865">Zymogen</keyword>
<protein>
    <recommendedName>
        <fullName evidence="1">Phosphatidylserine decarboxylase proenzyme</fullName>
        <ecNumber evidence="1">4.1.1.65</ecNumber>
    </recommendedName>
    <component>
        <recommendedName>
            <fullName evidence="1">Phosphatidylserine decarboxylase alpha chain</fullName>
        </recommendedName>
    </component>
    <component>
        <recommendedName>
            <fullName evidence="1">Phosphatidylserine decarboxylase beta chain</fullName>
        </recommendedName>
    </component>
</protein>
<comment type="function">
    <text evidence="1">Catalyzes the formation of phosphatidylethanolamine (PtdEtn) from phosphatidylserine (PtdSer).</text>
</comment>
<comment type="catalytic activity">
    <reaction evidence="1">
        <text>a 1,2-diacyl-sn-glycero-3-phospho-L-serine + H(+) = a 1,2-diacyl-sn-glycero-3-phosphoethanolamine + CO2</text>
        <dbReference type="Rhea" id="RHEA:20828"/>
        <dbReference type="ChEBI" id="CHEBI:15378"/>
        <dbReference type="ChEBI" id="CHEBI:16526"/>
        <dbReference type="ChEBI" id="CHEBI:57262"/>
        <dbReference type="ChEBI" id="CHEBI:64612"/>
        <dbReference type="EC" id="4.1.1.65"/>
    </reaction>
</comment>
<comment type="cofactor">
    <cofactor evidence="1">
        <name>pyruvate</name>
        <dbReference type="ChEBI" id="CHEBI:15361"/>
    </cofactor>
    <text evidence="1">Binds 1 pyruvoyl group covalently per subunit.</text>
</comment>
<comment type="pathway">
    <text evidence="1">Phospholipid metabolism; phosphatidylethanolamine biosynthesis; phosphatidylethanolamine from CDP-diacylglycerol: step 2/2.</text>
</comment>
<comment type="subunit">
    <text evidence="1">Heterodimer of a large membrane-associated beta subunit and a small pyruvoyl-containing alpha subunit.</text>
</comment>
<comment type="subcellular location">
    <subcellularLocation>
        <location evidence="1">Cell membrane</location>
        <topology evidence="1">Peripheral membrane protein</topology>
    </subcellularLocation>
</comment>
<comment type="PTM">
    <text evidence="1">Is synthesized initially as an inactive proenzyme. Formation of the active enzyme involves a self-maturation process in which the active site pyruvoyl group is generated from an internal serine residue via an autocatalytic post-translational modification. Two non-identical subunits are generated from the proenzyme in this reaction, and the pyruvate is formed at the N-terminus of the alpha chain, which is derived from the carboxyl end of the proenzyme. The post-translation cleavage follows an unusual pathway, termed non-hydrolytic serinolysis, in which the side chain hydroxyl group of the serine supplies its oxygen atom to form the C-terminus of the beta chain, while the remainder of the serine residue undergoes an oxidative deamination to produce ammonia and the pyruvoyl prosthetic group on the alpha chain.</text>
</comment>
<comment type="similarity">
    <text evidence="1">Belongs to the phosphatidylserine decarboxylase family. PSD-A subfamily.</text>
</comment>
<dbReference type="EC" id="4.1.1.65" evidence="1"/>
<dbReference type="EMBL" id="AE014291">
    <property type="protein sequence ID" value="AAN29386.1"/>
    <property type="molecule type" value="Genomic_DNA"/>
</dbReference>
<dbReference type="EMBL" id="CP002997">
    <property type="protein sequence ID" value="AEM17799.1"/>
    <property type="molecule type" value="Genomic_DNA"/>
</dbReference>
<dbReference type="KEGG" id="bms:BR0443"/>
<dbReference type="KEGG" id="bsi:BS1330_I0444"/>
<dbReference type="PATRIC" id="fig|204722.22.peg.1399"/>
<dbReference type="HOGENOM" id="CLU_072492_0_0_5"/>
<dbReference type="PhylomeDB" id="Q8G285"/>
<dbReference type="UniPathway" id="UPA00558">
    <property type="reaction ID" value="UER00616"/>
</dbReference>
<dbReference type="Proteomes" id="UP000007104">
    <property type="component" value="Chromosome I"/>
</dbReference>
<dbReference type="GO" id="GO:0005886">
    <property type="term" value="C:plasma membrane"/>
    <property type="evidence" value="ECO:0007669"/>
    <property type="project" value="UniProtKB-SubCell"/>
</dbReference>
<dbReference type="GO" id="GO:0004609">
    <property type="term" value="F:phosphatidylserine decarboxylase activity"/>
    <property type="evidence" value="ECO:0007669"/>
    <property type="project" value="UniProtKB-UniRule"/>
</dbReference>
<dbReference type="GO" id="GO:0006646">
    <property type="term" value="P:phosphatidylethanolamine biosynthetic process"/>
    <property type="evidence" value="ECO:0007669"/>
    <property type="project" value="UniProtKB-UniRule"/>
</dbReference>
<dbReference type="HAMAP" id="MF_00664">
    <property type="entry name" value="PS_decarb_PSD_A"/>
    <property type="match status" value="1"/>
</dbReference>
<dbReference type="InterPro" id="IPR003817">
    <property type="entry name" value="PS_Dcarbxylase"/>
</dbReference>
<dbReference type="InterPro" id="IPR033175">
    <property type="entry name" value="PSD-A"/>
</dbReference>
<dbReference type="NCBIfam" id="NF003677">
    <property type="entry name" value="PRK05305.1-1"/>
    <property type="match status" value="1"/>
</dbReference>
<dbReference type="NCBIfam" id="NF003678">
    <property type="entry name" value="PRK05305.1-2"/>
    <property type="match status" value="1"/>
</dbReference>
<dbReference type="NCBIfam" id="NF003679">
    <property type="entry name" value="PRK05305.1-3"/>
    <property type="match status" value="1"/>
</dbReference>
<dbReference type="NCBIfam" id="NF003685">
    <property type="entry name" value="PRK05305.2-5"/>
    <property type="match status" value="1"/>
</dbReference>
<dbReference type="PANTHER" id="PTHR35809">
    <property type="entry name" value="ARCHAETIDYLSERINE DECARBOXYLASE PROENZYME-RELATED"/>
    <property type="match status" value="1"/>
</dbReference>
<dbReference type="PANTHER" id="PTHR35809:SF1">
    <property type="entry name" value="ARCHAETIDYLSERINE DECARBOXYLASE PROENZYME-RELATED"/>
    <property type="match status" value="1"/>
</dbReference>
<dbReference type="Pfam" id="PF02666">
    <property type="entry name" value="PS_Dcarbxylase"/>
    <property type="match status" value="1"/>
</dbReference>
<reference key="1">
    <citation type="journal article" date="2002" name="Proc. Natl. Acad. Sci. U.S.A.">
        <title>The Brucella suis genome reveals fundamental similarities between animal and plant pathogens and symbionts.</title>
        <authorList>
            <person name="Paulsen I.T."/>
            <person name="Seshadri R."/>
            <person name="Nelson K.E."/>
            <person name="Eisen J.A."/>
            <person name="Heidelberg J.F."/>
            <person name="Read T.D."/>
            <person name="Dodson R.J."/>
            <person name="Umayam L.A."/>
            <person name="Brinkac L.M."/>
            <person name="Beanan M.J."/>
            <person name="Daugherty S.C."/>
            <person name="DeBoy R.T."/>
            <person name="Durkin A.S."/>
            <person name="Kolonay J.F."/>
            <person name="Madupu R."/>
            <person name="Nelson W.C."/>
            <person name="Ayodeji B."/>
            <person name="Kraul M."/>
            <person name="Shetty J."/>
            <person name="Malek J.A."/>
            <person name="Van Aken S.E."/>
            <person name="Riedmuller S."/>
            <person name="Tettelin H."/>
            <person name="Gill S.R."/>
            <person name="White O."/>
            <person name="Salzberg S.L."/>
            <person name="Hoover D.L."/>
            <person name="Lindler L.E."/>
            <person name="Halling S.M."/>
            <person name="Boyle S.M."/>
            <person name="Fraser C.M."/>
        </authorList>
    </citation>
    <scope>NUCLEOTIDE SEQUENCE [LARGE SCALE GENOMIC DNA]</scope>
    <source>
        <strain>1330</strain>
    </source>
</reference>
<reference key="2">
    <citation type="journal article" date="2011" name="J. Bacteriol.">
        <title>Revised genome sequence of Brucella suis 1330.</title>
        <authorList>
            <person name="Tae H."/>
            <person name="Shallom S."/>
            <person name="Settlage R."/>
            <person name="Preston D."/>
            <person name="Adams L.G."/>
            <person name="Garner H.R."/>
        </authorList>
    </citation>
    <scope>NUCLEOTIDE SEQUENCE [LARGE SCALE GENOMIC DNA]</scope>
    <source>
        <strain>1330</strain>
    </source>
</reference>